<proteinExistence type="inferred from homology"/>
<name>THIE_MYCTA</name>
<organism>
    <name type="scientific">Mycobacterium tuberculosis (strain ATCC 25177 / H37Ra)</name>
    <dbReference type="NCBI Taxonomy" id="419947"/>
    <lineage>
        <taxon>Bacteria</taxon>
        <taxon>Bacillati</taxon>
        <taxon>Actinomycetota</taxon>
        <taxon>Actinomycetes</taxon>
        <taxon>Mycobacteriales</taxon>
        <taxon>Mycobacteriaceae</taxon>
        <taxon>Mycobacterium</taxon>
        <taxon>Mycobacterium tuberculosis complex</taxon>
    </lineage>
</organism>
<feature type="chain" id="PRO_1000008156" description="Thiamine-phosphate synthase">
    <location>
        <begin position="1"/>
        <end position="222"/>
    </location>
</feature>
<feature type="binding site" evidence="1">
    <location>
        <begin position="40"/>
        <end position="44"/>
    </location>
    <ligand>
        <name>4-amino-2-methyl-5-(diphosphooxymethyl)pyrimidine</name>
        <dbReference type="ChEBI" id="CHEBI:57841"/>
    </ligand>
</feature>
<feature type="binding site" evidence="1">
    <location>
        <position position="81"/>
    </location>
    <ligand>
        <name>4-amino-2-methyl-5-(diphosphooxymethyl)pyrimidine</name>
        <dbReference type="ChEBI" id="CHEBI:57841"/>
    </ligand>
</feature>
<feature type="binding site" evidence="1">
    <location>
        <position position="82"/>
    </location>
    <ligand>
        <name>Mg(2+)</name>
        <dbReference type="ChEBI" id="CHEBI:18420"/>
    </ligand>
</feature>
<feature type="binding site" evidence="1">
    <location>
        <position position="101"/>
    </location>
    <ligand>
        <name>Mg(2+)</name>
        <dbReference type="ChEBI" id="CHEBI:18420"/>
    </ligand>
</feature>
<feature type="binding site" evidence="1">
    <location>
        <position position="120"/>
    </location>
    <ligand>
        <name>4-amino-2-methyl-5-(diphosphooxymethyl)pyrimidine</name>
        <dbReference type="ChEBI" id="CHEBI:57841"/>
    </ligand>
</feature>
<feature type="binding site" evidence="1">
    <location>
        <begin position="146"/>
        <end position="148"/>
    </location>
    <ligand>
        <name>2-[(2R,5Z)-2-carboxy-4-methylthiazol-5(2H)-ylidene]ethyl phosphate</name>
        <dbReference type="ChEBI" id="CHEBI:62899"/>
    </ligand>
</feature>
<feature type="binding site" evidence="1">
    <location>
        <position position="149"/>
    </location>
    <ligand>
        <name>4-amino-2-methyl-5-(diphosphooxymethyl)pyrimidine</name>
        <dbReference type="ChEBI" id="CHEBI:57841"/>
    </ligand>
</feature>
<feature type="binding site" evidence="1">
    <location>
        <position position="178"/>
    </location>
    <ligand>
        <name>2-[(2R,5Z)-2-carboxy-4-methylthiazol-5(2H)-ylidene]ethyl phosphate</name>
        <dbReference type="ChEBI" id="CHEBI:62899"/>
    </ligand>
</feature>
<reference key="1">
    <citation type="journal article" date="2008" name="PLoS ONE">
        <title>Genetic basis of virulence attenuation revealed by comparative genomic analysis of Mycobacterium tuberculosis strain H37Ra versus H37Rv.</title>
        <authorList>
            <person name="Zheng H."/>
            <person name="Lu L."/>
            <person name="Wang B."/>
            <person name="Pu S."/>
            <person name="Zhang X."/>
            <person name="Zhu G."/>
            <person name="Shi W."/>
            <person name="Zhang L."/>
            <person name="Wang H."/>
            <person name="Wang S."/>
            <person name="Zhao G."/>
            <person name="Zhang Y."/>
        </authorList>
    </citation>
    <scope>NUCLEOTIDE SEQUENCE [LARGE SCALE GENOMIC DNA]</scope>
    <source>
        <strain>ATCC 25177 / H37Ra</strain>
    </source>
</reference>
<keyword id="KW-0460">Magnesium</keyword>
<keyword id="KW-0479">Metal-binding</keyword>
<keyword id="KW-1185">Reference proteome</keyword>
<keyword id="KW-0784">Thiamine biosynthesis</keyword>
<keyword id="KW-0808">Transferase</keyword>
<accession>A5TZE0</accession>
<dbReference type="EC" id="2.5.1.3" evidence="1"/>
<dbReference type="EMBL" id="CP000611">
    <property type="protein sequence ID" value="ABQ72140.1"/>
    <property type="molecule type" value="Genomic_DNA"/>
</dbReference>
<dbReference type="RefSeq" id="WP_003402115.1">
    <property type="nucleotide sequence ID" value="NZ_CP016972.1"/>
</dbReference>
<dbReference type="SMR" id="A5TZE0"/>
<dbReference type="KEGG" id="mra:MRA_0420"/>
<dbReference type="eggNOG" id="COG0352">
    <property type="taxonomic scope" value="Bacteria"/>
</dbReference>
<dbReference type="HOGENOM" id="CLU_018272_3_0_11"/>
<dbReference type="UniPathway" id="UPA00060">
    <property type="reaction ID" value="UER00141"/>
</dbReference>
<dbReference type="Proteomes" id="UP000001988">
    <property type="component" value="Chromosome"/>
</dbReference>
<dbReference type="GO" id="GO:0005737">
    <property type="term" value="C:cytoplasm"/>
    <property type="evidence" value="ECO:0007669"/>
    <property type="project" value="TreeGrafter"/>
</dbReference>
<dbReference type="GO" id="GO:0000287">
    <property type="term" value="F:magnesium ion binding"/>
    <property type="evidence" value="ECO:0007669"/>
    <property type="project" value="UniProtKB-UniRule"/>
</dbReference>
<dbReference type="GO" id="GO:0004789">
    <property type="term" value="F:thiamine-phosphate diphosphorylase activity"/>
    <property type="evidence" value="ECO:0007669"/>
    <property type="project" value="UniProtKB-UniRule"/>
</dbReference>
<dbReference type="GO" id="GO:0009228">
    <property type="term" value="P:thiamine biosynthetic process"/>
    <property type="evidence" value="ECO:0007669"/>
    <property type="project" value="UniProtKB-KW"/>
</dbReference>
<dbReference type="GO" id="GO:0009229">
    <property type="term" value="P:thiamine diphosphate biosynthetic process"/>
    <property type="evidence" value="ECO:0007669"/>
    <property type="project" value="UniProtKB-UniRule"/>
</dbReference>
<dbReference type="CDD" id="cd00564">
    <property type="entry name" value="TMP_TenI"/>
    <property type="match status" value="1"/>
</dbReference>
<dbReference type="FunFam" id="3.20.20.70:FF:000178">
    <property type="entry name" value="Thiamine-phosphate synthase"/>
    <property type="match status" value="1"/>
</dbReference>
<dbReference type="Gene3D" id="3.20.20.70">
    <property type="entry name" value="Aldolase class I"/>
    <property type="match status" value="1"/>
</dbReference>
<dbReference type="HAMAP" id="MF_00097">
    <property type="entry name" value="TMP_synthase"/>
    <property type="match status" value="1"/>
</dbReference>
<dbReference type="InterPro" id="IPR013785">
    <property type="entry name" value="Aldolase_TIM"/>
</dbReference>
<dbReference type="InterPro" id="IPR036206">
    <property type="entry name" value="ThiamineP_synth_sf"/>
</dbReference>
<dbReference type="InterPro" id="IPR022998">
    <property type="entry name" value="ThiamineP_synth_TenI"/>
</dbReference>
<dbReference type="InterPro" id="IPR034291">
    <property type="entry name" value="TMP_synthase"/>
</dbReference>
<dbReference type="NCBIfam" id="TIGR00693">
    <property type="entry name" value="thiE"/>
    <property type="match status" value="1"/>
</dbReference>
<dbReference type="PANTHER" id="PTHR20857">
    <property type="entry name" value="THIAMINE-PHOSPHATE PYROPHOSPHORYLASE"/>
    <property type="match status" value="1"/>
</dbReference>
<dbReference type="PANTHER" id="PTHR20857:SF15">
    <property type="entry name" value="THIAMINE-PHOSPHATE SYNTHASE"/>
    <property type="match status" value="1"/>
</dbReference>
<dbReference type="Pfam" id="PF02581">
    <property type="entry name" value="TMP-TENI"/>
    <property type="match status" value="1"/>
</dbReference>
<dbReference type="SUPFAM" id="SSF51391">
    <property type="entry name" value="Thiamin phosphate synthase"/>
    <property type="match status" value="1"/>
</dbReference>
<comment type="function">
    <text evidence="1">Condenses 4-methyl-5-(beta-hydroxyethyl)thiazole monophosphate (THZ-P) and 2-methyl-4-amino-5-hydroxymethyl pyrimidine pyrophosphate (HMP-PP) to form thiamine monophosphate (TMP).</text>
</comment>
<comment type="catalytic activity">
    <reaction evidence="1">
        <text>2-[(2R,5Z)-2-carboxy-4-methylthiazol-5(2H)-ylidene]ethyl phosphate + 4-amino-2-methyl-5-(diphosphooxymethyl)pyrimidine + 2 H(+) = thiamine phosphate + CO2 + diphosphate</text>
        <dbReference type="Rhea" id="RHEA:47844"/>
        <dbReference type="ChEBI" id="CHEBI:15378"/>
        <dbReference type="ChEBI" id="CHEBI:16526"/>
        <dbReference type="ChEBI" id="CHEBI:33019"/>
        <dbReference type="ChEBI" id="CHEBI:37575"/>
        <dbReference type="ChEBI" id="CHEBI:57841"/>
        <dbReference type="ChEBI" id="CHEBI:62899"/>
        <dbReference type="EC" id="2.5.1.3"/>
    </reaction>
</comment>
<comment type="catalytic activity">
    <reaction evidence="1">
        <text>2-(2-carboxy-4-methylthiazol-5-yl)ethyl phosphate + 4-amino-2-methyl-5-(diphosphooxymethyl)pyrimidine + 2 H(+) = thiamine phosphate + CO2 + diphosphate</text>
        <dbReference type="Rhea" id="RHEA:47848"/>
        <dbReference type="ChEBI" id="CHEBI:15378"/>
        <dbReference type="ChEBI" id="CHEBI:16526"/>
        <dbReference type="ChEBI" id="CHEBI:33019"/>
        <dbReference type="ChEBI" id="CHEBI:37575"/>
        <dbReference type="ChEBI" id="CHEBI:57841"/>
        <dbReference type="ChEBI" id="CHEBI:62890"/>
        <dbReference type="EC" id="2.5.1.3"/>
    </reaction>
</comment>
<comment type="catalytic activity">
    <reaction evidence="1">
        <text>4-methyl-5-(2-phosphooxyethyl)-thiazole + 4-amino-2-methyl-5-(diphosphooxymethyl)pyrimidine + H(+) = thiamine phosphate + diphosphate</text>
        <dbReference type="Rhea" id="RHEA:22328"/>
        <dbReference type="ChEBI" id="CHEBI:15378"/>
        <dbReference type="ChEBI" id="CHEBI:33019"/>
        <dbReference type="ChEBI" id="CHEBI:37575"/>
        <dbReference type="ChEBI" id="CHEBI:57841"/>
        <dbReference type="ChEBI" id="CHEBI:58296"/>
        <dbReference type="EC" id="2.5.1.3"/>
    </reaction>
</comment>
<comment type="cofactor">
    <cofactor evidence="1">
        <name>Mg(2+)</name>
        <dbReference type="ChEBI" id="CHEBI:18420"/>
    </cofactor>
    <text evidence="1">Binds 1 Mg(2+) ion per subunit.</text>
</comment>
<comment type="pathway">
    <text evidence="1">Cofactor biosynthesis; thiamine diphosphate biosynthesis; thiamine phosphate from 4-amino-2-methyl-5-diphosphomethylpyrimidine and 4-methyl-5-(2-phosphoethyl)-thiazole: step 1/1.</text>
</comment>
<comment type="similarity">
    <text evidence="1">Belongs to the thiamine-phosphate synthase family.</text>
</comment>
<protein>
    <recommendedName>
        <fullName evidence="1">Thiamine-phosphate synthase</fullName>
        <shortName evidence="1">TP synthase</shortName>
        <shortName evidence="1">TPS</shortName>
        <ecNumber evidence="1">2.5.1.3</ecNumber>
    </recommendedName>
    <alternativeName>
        <fullName evidence="1">Thiamine-phosphate pyrophosphorylase</fullName>
        <shortName evidence="1">TMP pyrophosphorylase</shortName>
        <shortName evidence="1">TMP-PPase</shortName>
    </alternativeName>
</protein>
<sequence>MHESRLASARLYLCTDARRERGDLAQFAEAALAGGVDIIQLRDKGSPGELRFGPLQARDELAACEILADAAHRYGALFAVNDRADIARAAGADVLHLGQRDLPVNVARQILAPDTLIGRSTHDPDQVAAAAAGDADYFCVGPCWPTPTKPGRAAPGLGLVRVAAELGGDDKPWFAIGGINAQRLPAVLDAGARRIVVVRAITSADDPRAAAEQLRSALTAAN</sequence>
<gene>
    <name evidence="1" type="primary">thiE</name>
    <name type="ordered locus">MRA_0420</name>
</gene>
<evidence type="ECO:0000255" key="1">
    <source>
        <dbReference type="HAMAP-Rule" id="MF_00097"/>
    </source>
</evidence>